<evidence type="ECO:0000255" key="1">
    <source>
        <dbReference type="HAMAP-Rule" id="MF_00444"/>
    </source>
</evidence>
<accession>Q47MU2</accession>
<proteinExistence type="inferred from homology"/>
<organism>
    <name type="scientific">Thermobifida fusca (strain YX)</name>
    <dbReference type="NCBI Taxonomy" id="269800"/>
    <lineage>
        <taxon>Bacteria</taxon>
        <taxon>Bacillati</taxon>
        <taxon>Actinomycetota</taxon>
        <taxon>Actinomycetes</taxon>
        <taxon>Streptosporangiales</taxon>
        <taxon>Nocardiopsidaceae</taxon>
        <taxon>Thermobifida</taxon>
    </lineage>
</organism>
<keyword id="KW-0963">Cytoplasm</keyword>
<keyword id="KW-0378">Hydrolase</keyword>
<keyword id="KW-0645">Protease</keyword>
<keyword id="KW-0720">Serine protease</keyword>
<comment type="function">
    <text evidence="1">Cleaves peptides in various proteins in a process that requires ATP hydrolysis. Has a chymotrypsin-like activity. Plays a major role in the degradation of misfolded proteins.</text>
</comment>
<comment type="catalytic activity">
    <reaction evidence="1">
        <text>Hydrolysis of proteins to small peptides in the presence of ATP and magnesium. alpha-casein is the usual test substrate. In the absence of ATP, only oligopeptides shorter than five residues are hydrolyzed (such as succinyl-Leu-Tyr-|-NHMec, and Leu-Tyr-Leu-|-Tyr-Trp, in which cleavage of the -Tyr-|-Leu- and -Tyr-|-Trp bonds also occurs).</text>
        <dbReference type="EC" id="3.4.21.92"/>
    </reaction>
</comment>
<comment type="subunit">
    <text evidence="1">Fourteen ClpP subunits assemble into 2 heptameric rings which stack back to back to give a disk-like structure with a central cavity, resembling the structure of eukaryotic proteasomes.</text>
</comment>
<comment type="subcellular location">
    <subcellularLocation>
        <location evidence="1">Cytoplasm</location>
    </subcellularLocation>
</comment>
<comment type="similarity">
    <text evidence="1">Belongs to the peptidase S14 family.</text>
</comment>
<dbReference type="EC" id="3.4.21.92" evidence="1"/>
<dbReference type="EMBL" id="CP000088">
    <property type="protein sequence ID" value="AAZ56227.1"/>
    <property type="molecule type" value="Genomic_DNA"/>
</dbReference>
<dbReference type="SMR" id="Q47MU2"/>
<dbReference type="STRING" id="269800.Tfu_2194"/>
<dbReference type="MEROPS" id="S14.008"/>
<dbReference type="KEGG" id="tfu:Tfu_2194"/>
<dbReference type="eggNOG" id="COG0740">
    <property type="taxonomic scope" value="Bacteria"/>
</dbReference>
<dbReference type="HOGENOM" id="CLU_058707_3_2_11"/>
<dbReference type="GO" id="GO:0005737">
    <property type="term" value="C:cytoplasm"/>
    <property type="evidence" value="ECO:0007669"/>
    <property type="project" value="UniProtKB-SubCell"/>
</dbReference>
<dbReference type="GO" id="GO:0009368">
    <property type="term" value="C:endopeptidase Clp complex"/>
    <property type="evidence" value="ECO:0007669"/>
    <property type="project" value="TreeGrafter"/>
</dbReference>
<dbReference type="GO" id="GO:0004176">
    <property type="term" value="F:ATP-dependent peptidase activity"/>
    <property type="evidence" value="ECO:0007669"/>
    <property type="project" value="InterPro"/>
</dbReference>
<dbReference type="GO" id="GO:0051117">
    <property type="term" value="F:ATPase binding"/>
    <property type="evidence" value="ECO:0007669"/>
    <property type="project" value="TreeGrafter"/>
</dbReference>
<dbReference type="GO" id="GO:0004252">
    <property type="term" value="F:serine-type endopeptidase activity"/>
    <property type="evidence" value="ECO:0007669"/>
    <property type="project" value="UniProtKB-UniRule"/>
</dbReference>
<dbReference type="GO" id="GO:0006515">
    <property type="term" value="P:protein quality control for misfolded or incompletely synthesized proteins"/>
    <property type="evidence" value="ECO:0007669"/>
    <property type="project" value="TreeGrafter"/>
</dbReference>
<dbReference type="CDD" id="cd07017">
    <property type="entry name" value="S14_ClpP_2"/>
    <property type="match status" value="1"/>
</dbReference>
<dbReference type="FunFam" id="3.90.226.10:FF:000002">
    <property type="entry name" value="ATP-dependent Clp protease proteolytic subunit"/>
    <property type="match status" value="1"/>
</dbReference>
<dbReference type="Gene3D" id="3.90.226.10">
    <property type="entry name" value="2-enoyl-CoA Hydratase, Chain A, domain 1"/>
    <property type="match status" value="1"/>
</dbReference>
<dbReference type="HAMAP" id="MF_00444">
    <property type="entry name" value="ClpP"/>
    <property type="match status" value="1"/>
</dbReference>
<dbReference type="InterPro" id="IPR001907">
    <property type="entry name" value="ClpP"/>
</dbReference>
<dbReference type="InterPro" id="IPR029045">
    <property type="entry name" value="ClpP/crotonase-like_dom_sf"/>
</dbReference>
<dbReference type="InterPro" id="IPR023562">
    <property type="entry name" value="ClpP/TepA"/>
</dbReference>
<dbReference type="InterPro" id="IPR033135">
    <property type="entry name" value="ClpP_His_AS"/>
</dbReference>
<dbReference type="NCBIfam" id="NF001368">
    <property type="entry name" value="PRK00277.1"/>
    <property type="match status" value="1"/>
</dbReference>
<dbReference type="NCBIfam" id="NF009205">
    <property type="entry name" value="PRK12553.1"/>
    <property type="match status" value="1"/>
</dbReference>
<dbReference type="PANTHER" id="PTHR10381">
    <property type="entry name" value="ATP-DEPENDENT CLP PROTEASE PROTEOLYTIC SUBUNIT"/>
    <property type="match status" value="1"/>
</dbReference>
<dbReference type="PANTHER" id="PTHR10381:SF70">
    <property type="entry name" value="ATP-DEPENDENT CLP PROTEASE PROTEOLYTIC SUBUNIT"/>
    <property type="match status" value="1"/>
</dbReference>
<dbReference type="Pfam" id="PF00574">
    <property type="entry name" value="CLP_protease"/>
    <property type="match status" value="1"/>
</dbReference>
<dbReference type="PRINTS" id="PR00127">
    <property type="entry name" value="CLPPROTEASEP"/>
</dbReference>
<dbReference type="SUPFAM" id="SSF52096">
    <property type="entry name" value="ClpP/crotonase"/>
    <property type="match status" value="1"/>
</dbReference>
<dbReference type="PROSITE" id="PS00382">
    <property type="entry name" value="CLP_PROTEASE_HIS"/>
    <property type="match status" value="1"/>
</dbReference>
<protein>
    <recommendedName>
        <fullName evidence="1">ATP-dependent Clp protease proteolytic subunit 2</fullName>
        <ecNumber evidence="1">3.4.21.92</ecNumber>
    </recommendedName>
    <alternativeName>
        <fullName evidence="1">Endopeptidase Clp 2</fullName>
    </alternativeName>
</protein>
<gene>
    <name evidence="1" type="primary">clpP2</name>
    <name type="ordered locus">Tfu_2194</name>
</gene>
<reference key="1">
    <citation type="journal article" date="2007" name="J. Bacteriol.">
        <title>Genome sequence and analysis of the soil cellulolytic actinomycete Thermobifida fusca YX.</title>
        <authorList>
            <person name="Lykidis A."/>
            <person name="Mavromatis K."/>
            <person name="Ivanova N."/>
            <person name="Anderson I."/>
            <person name="Land M."/>
            <person name="DiBartolo G."/>
            <person name="Martinez M."/>
            <person name="Lapidus A."/>
            <person name="Lucas S."/>
            <person name="Copeland A."/>
            <person name="Richardson P."/>
            <person name="Wilson D.B."/>
            <person name="Kyrpides N."/>
        </authorList>
    </citation>
    <scope>NUCLEOTIDE SEQUENCE [LARGE SCALE GENOMIC DNA]</scope>
    <source>
        <strain>YX</strain>
    </source>
</reference>
<sequence length="203" mass="22728">MPPTHNEFMRTDVPMQPMYEQTAQRLLRQRIVFLGQQVDDEIANRIVGELLLLSAEDRERDITLYINSPGGSVTAGMAIYDVMQYIPNDVRTVGIGLAASMGQMLLCAGTRGKRYALPHTRIMMHQPSGGIGGTASDIRILADQLLYVKKMFLERISLHTGQPVEQIEKDADRDRWFTAQEALEYGFIDEVLTNTPDVTGGRS</sequence>
<feature type="chain" id="PRO_0000226475" description="ATP-dependent Clp protease proteolytic subunit 2">
    <location>
        <begin position="1"/>
        <end position="203"/>
    </location>
</feature>
<feature type="active site" description="Nucleophile" evidence="1">
    <location>
        <position position="100"/>
    </location>
</feature>
<feature type="active site" evidence="1">
    <location>
        <position position="125"/>
    </location>
</feature>
<name>CLPP2_THEFY</name>